<sequence>MGLLILGLGNPGLEFSLTRHNVGFSLLDKIVSKNGLFLKRKKKYEYSELKMISGRVILVKPLTYMNLSGSLFPSIFSDFYMCIKNLLVVLDNVDLPLGKCRLKERGGVSTHNGLRSISSVLGSSNYSRLYIGVGSNLMRDIKSFVLSRFCKDEMDRLEKLYDFLSDELIDISEANFKNKVQKINSSNF</sequence>
<proteinExistence type="inferred from homology"/>
<reference key="1">
    <citation type="journal article" date="2011" name="J. Bacteriol.">
        <title>Whole-genome sequences of thirteen isolates of Borrelia burgdorferi.</title>
        <authorList>
            <person name="Schutzer S.E."/>
            <person name="Fraser-Liggett C.M."/>
            <person name="Casjens S.R."/>
            <person name="Qiu W.G."/>
            <person name="Dunn J.J."/>
            <person name="Mongodin E.F."/>
            <person name="Luft B.J."/>
        </authorList>
    </citation>
    <scope>NUCLEOTIDE SEQUENCE [LARGE SCALE GENOMIC DNA]</scope>
    <source>
        <strain>ZS7</strain>
    </source>
</reference>
<protein>
    <recommendedName>
        <fullName evidence="1">Peptidyl-tRNA hydrolase</fullName>
        <shortName evidence="1">Pth</shortName>
        <ecNumber evidence="1">3.1.1.29</ecNumber>
    </recommendedName>
</protein>
<organism>
    <name type="scientific">Borreliella burgdorferi (strain ZS7)</name>
    <name type="common">Borrelia burgdorferi</name>
    <dbReference type="NCBI Taxonomy" id="445985"/>
    <lineage>
        <taxon>Bacteria</taxon>
        <taxon>Pseudomonadati</taxon>
        <taxon>Spirochaetota</taxon>
        <taxon>Spirochaetia</taxon>
        <taxon>Spirochaetales</taxon>
        <taxon>Borreliaceae</taxon>
        <taxon>Borreliella</taxon>
    </lineage>
</organism>
<comment type="function">
    <text evidence="1">Hydrolyzes ribosome-free peptidyl-tRNAs (with 1 or more amino acids incorporated), which drop off the ribosome during protein synthesis, or as a result of ribosome stalling.</text>
</comment>
<comment type="function">
    <text evidence="1">Catalyzes the release of premature peptidyl moieties from peptidyl-tRNA molecules trapped in stalled 50S ribosomal subunits, and thus maintains levels of free tRNAs and 50S ribosomes.</text>
</comment>
<comment type="catalytic activity">
    <reaction evidence="1">
        <text>an N-acyl-L-alpha-aminoacyl-tRNA + H2O = an N-acyl-L-amino acid + a tRNA + H(+)</text>
        <dbReference type="Rhea" id="RHEA:54448"/>
        <dbReference type="Rhea" id="RHEA-COMP:10123"/>
        <dbReference type="Rhea" id="RHEA-COMP:13883"/>
        <dbReference type="ChEBI" id="CHEBI:15377"/>
        <dbReference type="ChEBI" id="CHEBI:15378"/>
        <dbReference type="ChEBI" id="CHEBI:59874"/>
        <dbReference type="ChEBI" id="CHEBI:78442"/>
        <dbReference type="ChEBI" id="CHEBI:138191"/>
        <dbReference type="EC" id="3.1.1.29"/>
    </reaction>
</comment>
<comment type="subunit">
    <text evidence="1">Monomer.</text>
</comment>
<comment type="subcellular location">
    <subcellularLocation>
        <location evidence="1">Cytoplasm</location>
    </subcellularLocation>
</comment>
<comment type="similarity">
    <text evidence="1">Belongs to the PTH family.</text>
</comment>
<evidence type="ECO:0000255" key="1">
    <source>
        <dbReference type="HAMAP-Rule" id="MF_00083"/>
    </source>
</evidence>
<name>PTH_BORBZ</name>
<dbReference type="EC" id="3.1.1.29" evidence="1"/>
<dbReference type="EMBL" id="CP001205">
    <property type="protein sequence ID" value="ACK74668.1"/>
    <property type="molecule type" value="Genomic_DNA"/>
</dbReference>
<dbReference type="RefSeq" id="WP_002660982.1">
    <property type="nucleotide sequence ID" value="NC_011728.1"/>
</dbReference>
<dbReference type="SMR" id="B7J0N3"/>
<dbReference type="KEGG" id="bbz:BbuZS7_0817"/>
<dbReference type="HOGENOM" id="CLU_062456_4_1_12"/>
<dbReference type="Proteomes" id="UP000006901">
    <property type="component" value="Chromosome"/>
</dbReference>
<dbReference type="GO" id="GO:0005737">
    <property type="term" value="C:cytoplasm"/>
    <property type="evidence" value="ECO:0007669"/>
    <property type="project" value="UniProtKB-SubCell"/>
</dbReference>
<dbReference type="GO" id="GO:0004045">
    <property type="term" value="F:peptidyl-tRNA hydrolase activity"/>
    <property type="evidence" value="ECO:0007669"/>
    <property type="project" value="UniProtKB-UniRule"/>
</dbReference>
<dbReference type="GO" id="GO:0000049">
    <property type="term" value="F:tRNA binding"/>
    <property type="evidence" value="ECO:0007669"/>
    <property type="project" value="UniProtKB-UniRule"/>
</dbReference>
<dbReference type="GO" id="GO:0006515">
    <property type="term" value="P:protein quality control for misfolded or incompletely synthesized proteins"/>
    <property type="evidence" value="ECO:0007669"/>
    <property type="project" value="UniProtKB-UniRule"/>
</dbReference>
<dbReference type="GO" id="GO:0072344">
    <property type="term" value="P:rescue of stalled ribosome"/>
    <property type="evidence" value="ECO:0007669"/>
    <property type="project" value="UniProtKB-UniRule"/>
</dbReference>
<dbReference type="CDD" id="cd00462">
    <property type="entry name" value="PTH"/>
    <property type="match status" value="1"/>
</dbReference>
<dbReference type="Gene3D" id="3.40.50.1470">
    <property type="entry name" value="Peptidyl-tRNA hydrolase"/>
    <property type="match status" value="1"/>
</dbReference>
<dbReference type="HAMAP" id="MF_00083">
    <property type="entry name" value="Pept_tRNA_hydro_bact"/>
    <property type="match status" value="1"/>
</dbReference>
<dbReference type="InterPro" id="IPR001328">
    <property type="entry name" value="Pept_tRNA_hydro"/>
</dbReference>
<dbReference type="InterPro" id="IPR018171">
    <property type="entry name" value="Pept_tRNA_hydro_CS"/>
</dbReference>
<dbReference type="InterPro" id="IPR036416">
    <property type="entry name" value="Pept_tRNA_hydro_sf"/>
</dbReference>
<dbReference type="NCBIfam" id="TIGR00447">
    <property type="entry name" value="pth"/>
    <property type="match status" value="1"/>
</dbReference>
<dbReference type="PANTHER" id="PTHR17224">
    <property type="entry name" value="PEPTIDYL-TRNA HYDROLASE"/>
    <property type="match status" value="1"/>
</dbReference>
<dbReference type="PANTHER" id="PTHR17224:SF1">
    <property type="entry name" value="PEPTIDYL-TRNA HYDROLASE"/>
    <property type="match status" value="1"/>
</dbReference>
<dbReference type="Pfam" id="PF01195">
    <property type="entry name" value="Pept_tRNA_hydro"/>
    <property type="match status" value="1"/>
</dbReference>
<dbReference type="SUPFAM" id="SSF53178">
    <property type="entry name" value="Peptidyl-tRNA hydrolase-like"/>
    <property type="match status" value="1"/>
</dbReference>
<dbReference type="PROSITE" id="PS01195">
    <property type="entry name" value="PEPT_TRNA_HYDROL_1"/>
    <property type="match status" value="1"/>
</dbReference>
<dbReference type="PROSITE" id="PS01196">
    <property type="entry name" value="PEPT_TRNA_HYDROL_2"/>
    <property type="match status" value="1"/>
</dbReference>
<gene>
    <name evidence="1" type="primary">pth</name>
    <name type="ordered locus">BbuZS7_0817</name>
</gene>
<accession>B7J0N3</accession>
<feature type="chain" id="PRO_1000192961" description="Peptidyl-tRNA hydrolase">
    <location>
        <begin position="1"/>
        <end position="188"/>
    </location>
</feature>
<feature type="active site" description="Proton acceptor" evidence="1">
    <location>
        <position position="20"/>
    </location>
</feature>
<feature type="binding site" evidence="1">
    <location>
        <position position="15"/>
    </location>
    <ligand>
        <name>tRNA</name>
        <dbReference type="ChEBI" id="CHEBI:17843"/>
    </ligand>
</feature>
<feature type="binding site" evidence="1">
    <location>
        <position position="64"/>
    </location>
    <ligand>
        <name>tRNA</name>
        <dbReference type="ChEBI" id="CHEBI:17843"/>
    </ligand>
</feature>
<feature type="binding site" evidence="1">
    <location>
        <position position="66"/>
    </location>
    <ligand>
        <name>tRNA</name>
        <dbReference type="ChEBI" id="CHEBI:17843"/>
    </ligand>
</feature>
<feature type="binding site" evidence="1">
    <location>
        <position position="112"/>
    </location>
    <ligand>
        <name>tRNA</name>
        <dbReference type="ChEBI" id="CHEBI:17843"/>
    </ligand>
</feature>
<feature type="site" description="Discriminates between blocked and unblocked aminoacyl-tRNA" evidence="1">
    <location>
        <position position="10"/>
    </location>
</feature>
<feature type="site" description="Stabilizes the basic form of H active site to accept a proton" evidence="1">
    <location>
        <position position="91"/>
    </location>
</feature>
<keyword id="KW-0963">Cytoplasm</keyword>
<keyword id="KW-0378">Hydrolase</keyword>
<keyword id="KW-0694">RNA-binding</keyword>
<keyword id="KW-0820">tRNA-binding</keyword>